<keyword id="KW-0963">Cytoplasm</keyword>
<keyword id="KW-0521">NADP</keyword>
<keyword id="KW-0560">Oxidoreductase</keyword>
<keyword id="KW-0671">Queuosine biosynthesis</keyword>
<organism>
    <name type="scientific">Pseudomonas aeruginosa (strain LESB58)</name>
    <dbReference type="NCBI Taxonomy" id="557722"/>
    <lineage>
        <taxon>Bacteria</taxon>
        <taxon>Pseudomonadati</taxon>
        <taxon>Pseudomonadota</taxon>
        <taxon>Gammaproteobacteria</taxon>
        <taxon>Pseudomonadales</taxon>
        <taxon>Pseudomonadaceae</taxon>
        <taxon>Pseudomonas</taxon>
    </lineage>
</organism>
<reference key="1">
    <citation type="journal article" date="2009" name="Genome Res.">
        <title>Newly introduced genomic prophage islands are critical determinants of in vivo competitiveness in the Liverpool epidemic strain of Pseudomonas aeruginosa.</title>
        <authorList>
            <person name="Winstanley C."/>
            <person name="Langille M.G.I."/>
            <person name="Fothergill J.L."/>
            <person name="Kukavica-Ibrulj I."/>
            <person name="Paradis-Bleau C."/>
            <person name="Sanschagrin F."/>
            <person name="Thomson N.R."/>
            <person name="Winsor G.L."/>
            <person name="Quail M.A."/>
            <person name="Lennard N."/>
            <person name="Bignell A."/>
            <person name="Clarke L."/>
            <person name="Seeger K."/>
            <person name="Saunders D."/>
            <person name="Harris D."/>
            <person name="Parkhill J."/>
            <person name="Hancock R.E.W."/>
            <person name="Brinkman F.S.L."/>
            <person name="Levesque R.C."/>
        </authorList>
    </citation>
    <scope>NUCLEOTIDE SEQUENCE [LARGE SCALE GENOMIC DNA]</scope>
    <source>
        <strain>LESB58</strain>
    </source>
</reference>
<comment type="function">
    <text evidence="1">Catalyzes the NADPH-dependent reduction of 7-cyano-7-deazaguanine (preQ0) to 7-aminomethyl-7-deazaguanine (preQ1).</text>
</comment>
<comment type="catalytic activity">
    <reaction evidence="1">
        <text>7-aminomethyl-7-carbaguanine + 2 NADP(+) = 7-cyano-7-deazaguanine + 2 NADPH + 3 H(+)</text>
        <dbReference type="Rhea" id="RHEA:13409"/>
        <dbReference type="ChEBI" id="CHEBI:15378"/>
        <dbReference type="ChEBI" id="CHEBI:45075"/>
        <dbReference type="ChEBI" id="CHEBI:57783"/>
        <dbReference type="ChEBI" id="CHEBI:58349"/>
        <dbReference type="ChEBI" id="CHEBI:58703"/>
        <dbReference type="EC" id="1.7.1.13"/>
    </reaction>
</comment>
<comment type="pathway">
    <text evidence="1">tRNA modification; tRNA-queuosine biosynthesis.</text>
</comment>
<comment type="subunit">
    <text evidence="1">Homodimer.</text>
</comment>
<comment type="subcellular location">
    <subcellularLocation>
        <location evidence="1">Cytoplasm</location>
    </subcellularLocation>
</comment>
<comment type="similarity">
    <text evidence="1">Belongs to the GTP cyclohydrolase I family. QueF type 2 subfamily.</text>
</comment>
<proteinExistence type="inferred from homology"/>
<accession>B7UWN0</accession>
<dbReference type="EC" id="1.7.1.13" evidence="1"/>
<dbReference type="EMBL" id="FM209186">
    <property type="protein sequence ID" value="CAW26993.1"/>
    <property type="molecule type" value="Genomic_DNA"/>
</dbReference>
<dbReference type="RefSeq" id="WP_003098780.1">
    <property type="nucleotide sequence ID" value="NC_011770.1"/>
</dbReference>
<dbReference type="SMR" id="B7UWN0"/>
<dbReference type="KEGG" id="pag:PLES_22661"/>
<dbReference type="HOGENOM" id="CLU_054738_0_0_6"/>
<dbReference type="UniPathway" id="UPA00392"/>
<dbReference type="GO" id="GO:0005737">
    <property type="term" value="C:cytoplasm"/>
    <property type="evidence" value="ECO:0007669"/>
    <property type="project" value="UniProtKB-SubCell"/>
</dbReference>
<dbReference type="GO" id="GO:0033739">
    <property type="term" value="F:preQ1 synthase activity"/>
    <property type="evidence" value="ECO:0007669"/>
    <property type="project" value="UniProtKB-UniRule"/>
</dbReference>
<dbReference type="GO" id="GO:0008616">
    <property type="term" value="P:queuosine biosynthetic process"/>
    <property type="evidence" value="ECO:0007669"/>
    <property type="project" value="UniProtKB-UniRule"/>
</dbReference>
<dbReference type="GO" id="GO:0006400">
    <property type="term" value="P:tRNA modification"/>
    <property type="evidence" value="ECO:0007669"/>
    <property type="project" value="UniProtKB-UniRule"/>
</dbReference>
<dbReference type="Gene3D" id="3.30.1130.10">
    <property type="match status" value="2"/>
</dbReference>
<dbReference type="HAMAP" id="MF_00817">
    <property type="entry name" value="QueF_type2"/>
    <property type="match status" value="1"/>
</dbReference>
<dbReference type="InterPro" id="IPR043133">
    <property type="entry name" value="GTP-CH-I_C/QueF"/>
</dbReference>
<dbReference type="InterPro" id="IPR050084">
    <property type="entry name" value="NADPH_dep_7-cyano-7-deazaG_red"/>
</dbReference>
<dbReference type="InterPro" id="IPR029500">
    <property type="entry name" value="QueF"/>
</dbReference>
<dbReference type="InterPro" id="IPR029139">
    <property type="entry name" value="QueF_N"/>
</dbReference>
<dbReference type="InterPro" id="IPR016428">
    <property type="entry name" value="QueF_type2"/>
</dbReference>
<dbReference type="NCBIfam" id="TIGR03138">
    <property type="entry name" value="QueF"/>
    <property type="match status" value="1"/>
</dbReference>
<dbReference type="PANTHER" id="PTHR34354">
    <property type="entry name" value="NADPH-DEPENDENT 7-CYANO-7-DEAZAGUANINE REDUCTASE"/>
    <property type="match status" value="1"/>
</dbReference>
<dbReference type="PANTHER" id="PTHR34354:SF1">
    <property type="entry name" value="NADPH-DEPENDENT 7-CYANO-7-DEAZAGUANINE REDUCTASE"/>
    <property type="match status" value="1"/>
</dbReference>
<dbReference type="Pfam" id="PF14489">
    <property type="entry name" value="QueF"/>
    <property type="match status" value="1"/>
</dbReference>
<dbReference type="Pfam" id="PF14819">
    <property type="entry name" value="QueF_N"/>
    <property type="match status" value="1"/>
</dbReference>
<dbReference type="PIRSF" id="PIRSF004750">
    <property type="entry name" value="Nitrile_oxidored_YqcD_prd"/>
    <property type="match status" value="1"/>
</dbReference>
<dbReference type="SUPFAM" id="SSF55620">
    <property type="entry name" value="Tetrahydrobiopterin biosynthesis enzymes-like"/>
    <property type="match status" value="1"/>
</dbReference>
<name>QUEF_PSEA8</name>
<evidence type="ECO:0000255" key="1">
    <source>
        <dbReference type="HAMAP-Rule" id="MF_00817"/>
    </source>
</evidence>
<protein>
    <recommendedName>
        <fullName evidence="1">NADPH-dependent 7-cyano-7-deazaguanine reductase</fullName>
        <ecNumber evidence="1">1.7.1.13</ecNumber>
    </recommendedName>
    <alternativeName>
        <fullName evidence="1">7-cyano-7-carbaguanine reductase</fullName>
    </alternativeName>
    <alternativeName>
        <fullName evidence="1">NADPH-dependent nitrile oxidoreductase</fullName>
    </alternativeName>
    <alternativeName>
        <fullName evidence="1">PreQ(0) reductase</fullName>
    </alternativeName>
</protein>
<gene>
    <name evidence="1" type="primary">queF</name>
    <name type="ordered locus">PLES_22661</name>
</gene>
<feature type="chain" id="PRO_1000134278" description="NADPH-dependent 7-cyano-7-deazaguanine reductase">
    <location>
        <begin position="1"/>
        <end position="276"/>
    </location>
</feature>
<feature type="active site" description="Thioimide intermediate" evidence="1">
    <location>
        <position position="184"/>
    </location>
</feature>
<feature type="active site" description="Proton donor" evidence="1">
    <location>
        <position position="191"/>
    </location>
</feature>
<feature type="binding site" evidence="1">
    <location>
        <begin position="83"/>
        <end position="85"/>
    </location>
    <ligand>
        <name>substrate</name>
    </ligand>
</feature>
<feature type="binding site" evidence="1">
    <location>
        <begin position="85"/>
        <end position="86"/>
    </location>
    <ligand>
        <name>NADPH</name>
        <dbReference type="ChEBI" id="CHEBI:57783"/>
    </ligand>
</feature>
<feature type="binding site" evidence="1">
    <location>
        <begin position="223"/>
        <end position="224"/>
    </location>
    <ligand>
        <name>substrate</name>
    </ligand>
</feature>
<feature type="binding site" evidence="1">
    <location>
        <begin position="252"/>
        <end position="253"/>
    </location>
    <ligand>
        <name>NADPH</name>
        <dbReference type="ChEBI" id="CHEBI:57783"/>
    </ligand>
</feature>
<sequence length="276" mass="30820">MQHPAEHSPLGKTSEYVSSYTPSLLFPISRTAKWAELGLSAETLPYRGVDIWNCYELSWLTPAGKPVVAIGEFSIPADSPNIIESKSFKLYLNSLNQSAFDSREALRAVLQKDLSAAAGAPVGVRLRSLDEVAEEGIGRLPGRCIDELDIAVDGYEQPRPELLRCDAGRIVEEQLYSHLLKSNCPVTGQPDWGTLVVDYRGPALDPASLLAYLVSFRQHQDFHEQCVERIFLDLQRLLQPQALSVYARYVRRGGLDINPYRSLAEVAPDNRRLVRQ</sequence>